<evidence type="ECO:0000255" key="1">
    <source>
        <dbReference type="HAMAP-Rule" id="MF_00237"/>
    </source>
</evidence>
<evidence type="ECO:0000256" key="2">
    <source>
        <dbReference type="SAM" id="MobiDB-lite"/>
    </source>
</evidence>
<comment type="function">
    <text evidence="1">Part of the twin-arginine translocation (Tat) system that transports large folded proteins containing a characteristic twin-arginine motif in their signal peptide across membranes. Together with TatC, TatB is part of a receptor directly interacting with Tat signal peptides. TatB may form an oligomeric binding site that transiently accommodates folded Tat precursor proteins before their translocation.</text>
</comment>
<comment type="subunit">
    <text evidence="1">The Tat system comprises two distinct complexes: a TatABC complex, containing multiple copies of TatA, TatB and TatC subunits, and a separate TatA complex, containing only TatA subunits. Substrates initially bind to the TatABC complex, which probably triggers association of the separate TatA complex to form the active translocon.</text>
</comment>
<comment type="subcellular location">
    <subcellularLocation>
        <location evidence="1">Cell inner membrane</location>
        <topology evidence="1">Single-pass membrane protein</topology>
    </subcellularLocation>
</comment>
<comment type="similarity">
    <text evidence="1">Belongs to the TatB family.</text>
</comment>
<keyword id="KW-0997">Cell inner membrane</keyword>
<keyword id="KW-1003">Cell membrane</keyword>
<keyword id="KW-0472">Membrane</keyword>
<keyword id="KW-0653">Protein transport</keyword>
<keyword id="KW-1185">Reference proteome</keyword>
<keyword id="KW-0811">Translocation</keyword>
<keyword id="KW-0812">Transmembrane</keyword>
<keyword id="KW-1133">Transmembrane helix</keyword>
<keyword id="KW-0813">Transport</keyword>
<name>TATB_SHEB5</name>
<organism>
    <name type="scientific">Shewanella baltica (strain OS155 / ATCC BAA-1091)</name>
    <dbReference type="NCBI Taxonomy" id="325240"/>
    <lineage>
        <taxon>Bacteria</taxon>
        <taxon>Pseudomonadati</taxon>
        <taxon>Pseudomonadota</taxon>
        <taxon>Gammaproteobacteria</taxon>
        <taxon>Alteromonadales</taxon>
        <taxon>Shewanellaceae</taxon>
        <taxon>Shewanella</taxon>
    </lineage>
</organism>
<sequence length="166" mass="17754">MFDGIGFMELLLIGVLGLVVLGPERLPVAVRSITSWIRAMKRMANSVKEELEQELKIEQLHADLKKAESKGLSNLSPELKESIEQLKQAAQSVNRPYQVQDPVKDTPAPENQIYSPVASTVQTSPAQASQANPTATVEASPAPASPATPSEPSQGADTRSNPKANG</sequence>
<dbReference type="EMBL" id="CP000563">
    <property type="protein sequence ID" value="ABN63369.1"/>
    <property type="molecule type" value="Genomic_DNA"/>
</dbReference>
<dbReference type="RefSeq" id="WP_011847990.1">
    <property type="nucleotide sequence ID" value="NC_009052.1"/>
</dbReference>
<dbReference type="SMR" id="A3D9F6"/>
<dbReference type="STRING" id="325240.Sbal_3899"/>
<dbReference type="KEGG" id="sbl:Sbal_3899"/>
<dbReference type="HOGENOM" id="CLU_086034_1_0_6"/>
<dbReference type="OrthoDB" id="9816005at2"/>
<dbReference type="Proteomes" id="UP000001557">
    <property type="component" value="Chromosome"/>
</dbReference>
<dbReference type="GO" id="GO:0033281">
    <property type="term" value="C:TAT protein transport complex"/>
    <property type="evidence" value="ECO:0007669"/>
    <property type="project" value="UniProtKB-UniRule"/>
</dbReference>
<dbReference type="GO" id="GO:0008320">
    <property type="term" value="F:protein transmembrane transporter activity"/>
    <property type="evidence" value="ECO:0007669"/>
    <property type="project" value="UniProtKB-UniRule"/>
</dbReference>
<dbReference type="GO" id="GO:0043953">
    <property type="term" value="P:protein transport by the Tat complex"/>
    <property type="evidence" value="ECO:0007669"/>
    <property type="project" value="UniProtKB-UniRule"/>
</dbReference>
<dbReference type="Gene3D" id="1.20.5.3310">
    <property type="match status" value="1"/>
</dbReference>
<dbReference type="HAMAP" id="MF_00237">
    <property type="entry name" value="TatB"/>
    <property type="match status" value="1"/>
</dbReference>
<dbReference type="InterPro" id="IPR003369">
    <property type="entry name" value="TatA/B/E"/>
</dbReference>
<dbReference type="InterPro" id="IPR018448">
    <property type="entry name" value="TatB"/>
</dbReference>
<dbReference type="NCBIfam" id="TIGR01410">
    <property type="entry name" value="tatB"/>
    <property type="match status" value="1"/>
</dbReference>
<dbReference type="PANTHER" id="PTHR33162">
    <property type="entry name" value="SEC-INDEPENDENT PROTEIN TRANSLOCASE PROTEIN TATA, CHLOROPLASTIC"/>
    <property type="match status" value="1"/>
</dbReference>
<dbReference type="PANTHER" id="PTHR33162:SF1">
    <property type="entry name" value="SEC-INDEPENDENT PROTEIN TRANSLOCASE PROTEIN TATA, CHLOROPLASTIC"/>
    <property type="match status" value="1"/>
</dbReference>
<dbReference type="Pfam" id="PF02416">
    <property type="entry name" value="TatA_B_E"/>
    <property type="match status" value="1"/>
</dbReference>
<dbReference type="PRINTS" id="PR01506">
    <property type="entry name" value="TATBPROTEIN"/>
</dbReference>
<feature type="chain" id="PRO_1000044462" description="Sec-independent protein translocase protein TatB">
    <location>
        <begin position="1"/>
        <end position="166"/>
    </location>
</feature>
<feature type="transmembrane region" description="Helical" evidence="1">
    <location>
        <begin position="2"/>
        <end position="22"/>
    </location>
</feature>
<feature type="region of interest" description="Disordered" evidence="2">
    <location>
        <begin position="69"/>
        <end position="166"/>
    </location>
</feature>
<feature type="compositionally biased region" description="Polar residues" evidence="2">
    <location>
        <begin position="88"/>
        <end position="97"/>
    </location>
</feature>
<feature type="compositionally biased region" description="Polar residues" evidence="2">
    <location>
        <begin position="112"/>
        <end position="132"/>
    </location>
</feature>
<feature type="compositionally biased region" description="Low complexity" evidence="2">
    <location>
        <begin position="133"/>
        <end position="153"/>
    </location>
</feature>
<feature type="compositionally biased region" description="Polar residues" evidence="2">
    <location>
        <begin position="155"/>
        <end position="166"/>
    </location>
</feature>
<protein>
    <recommendedName>
        <fullName evidence="1">Sec-independent protein translocase protein TatB</fullName>
    </recommendedName>
</protein>
<proteinExistence type="inferred from homology"/>
<gene>
    <name evidence="1" type="primary">tatB</name>
    <name type="ordered locus">Sbal_3899</name>
</gene>
<reference key="1">
    <citation type="submission" date="2007-02" db="EMBL/GenBank/DDBJ databases">
        <title>Complete sequence of chromosome of Shewanella baltica OS155.</title>
        <authorList>
            <consortium name="US DOE Joint Genome Institute"/>
            <person name="Copeland A."/>
            <person name="Lucas S."/>
            <person name="Lapidus A."/>
            <person name="Barry K."/>
            <person name="Detter J.C."/>
            <person name="Glavina del Rio T."/>
            <person name="Hammon N."/>
            <person name="Israni S."/>
            <person name="Dalin E."/>
            <person name="Tice H."/>
            <person name="Pitluck S."/>
            <person name="Sims D.R."/>
            <person name="Brettin T."/>
            <person name="Bruce D."/>
            <person name="Han C."/>
            <person name="Tapia R."/>
            <person name="Brainard J."/>
            <person name="Schmutz J."/>
            <person name="Larimer F."/>
            <person name="Land M."/>
            <person name="Hauser L."/>
            <person name="Kyrpides N."/>
            <person name="Mikhailova N."/>
            <person name="Brettar I."/>
            <person name="Klappenbach J."/>
            <person name="Konstantinidis K."/>
            <person name="Rodrigues J."/>
            <person name="Tiedje J."/>
            <person name="Richardson P."/>
        </authorList>
    </citation>
    <scope>NUCLEOTIDE SEQUENCE [LARGE SCALE GENOMIC DNA]</scope>
    <source>
        <strain>OS155 / ATCC BAA-1091</strain>
    </source>
</reference>
<accession>A3D9F6</accession>